<keyword id="KW-0143">Chaperone</keyword>
<keyword id="KW-0963">Cytoplasm</keyword>
<keyword id="KW-0344">Guanine-nucleotide releasing factor</keyword>
<keyword id="KW-1185">Reference proteome</keyword>
<accession>Q6P4W7</accession>
<organism>
    <name type="scientific">Xenopus tropicalis</name>
    <name type="common">Western clawed frog</name>
    <name type="synonym">Silurana tropicalis</name>
    <dbReference type="NCBI Taxonomy" id="8364"/>
    <lineage>
        <taxon>Eukaryota</taxon>
        <taxon>Metazoa</taxon>
        <taxon>Chordata</taxon>
        <taxon>Craniata</taxon>
        <taxon>Vertebrata</taxon>
        <taxon>Euteleostomi</taxon>
        <taxon>Amphibia</taxon>
        <taxon>Batrachia</taxon>
        <taxon>Anura</taxon>
        <taxon>Pipoidea</taxon>
        <taxon>Pipidae</taxon>
        <taxon>Xenopodinae</taxon>
        <taxon>Xenopus</taxon>
        <taxon>Silurana</taxon>
    </lineage>
</organism>
<proteinExistence type="evidence at transcript level"/>
<feature type="chain" id="PRO_0000235898" description="Chaperone Ric-8A">
    <location>
        <begin position="1"/>
        <end position="539"/>
    </location>
</feature>
<gene>
    <name type="primary">ric8a</name>
</gene>
<comment type="function">
    <text evidence="1">Chaperone that specifically binds and folds nascent G alpha proteins prior to G protein heterotrimer formation, promoting their stability and activity: folds GNAI1, GNAO1, GNA13 and GNAQ. Does not fold G(s) G-alpha proteins GNAS nor GNAL. Also acts as a guanine nucleotide exchange factor (GEF) for G alpha proteins by stimulating exchange of bound GDP for free GTP.</text>
</comment>
<comment type="subcellular location">
    <subcellularLocation>
        <location evidence="1">Cytoplasm</location>
        <location evidence="1">Cell cortex</location>
    </subcellularLocation>
    <subcellularLocation>
        <location evidence="1">Cytoplasm</location>
    </subcellularLocation>
</comment>
<comment type="similarity">
    <text evidence="2">Belongs to the synembryn family.</text>
</comment>
<reference key="1">
    <citation type="submission" date="2003-12" db="EMBL/GenBank/DDBJ databases">
        <authorList>
            <consortium name="NIH - Xenopus Gene Collection (XGC) project"/>
        </authorList>
    </citation>
    <scope>NUCLEOTIDE SEQUENCE [LARGE SCALE MRNA]</scope>
    <source>
        <tissue>Embryo</tissue>
    </source>
</reference>
<dbReference type="EMBL" id="BC063218">
    <property type="protein sequence ID" value="AAH63218.1"/>
    <property type="molecule type" value="mRNA"/>
</dbReference>
<dbReference type="RefSeq" id="NP_989159.1">
    <property type="nucleotide sequence ID" value="NM_203828.1"/>
</dbReference>
<dbReference type="SMR" id="Q6P4W7"/>
<dbReference type="FunCoup" id="Q6P4W7">
    <property type="interactions" value="2581"/>
</dbReference>
<dbReference type="STRING" id="8364.ENSXETP00000012223"/>
<dbReference type="PaxDb" id="8364-ENSXETP00000006281"/>
<dbReference type="GeneID" id="394766"/>
<dbReference type="KEGG" id="xtr:394766"/>
<dbReference type="AGR" id="Xenbase:XB-GENE-5745094"/>
<dbReference type="CTD" id="60626"/>
<dbReference type="Xenbase" id="XB-GENE-5745094">
    <property type="gene designation" value="ric8a"/>
</dbReference>
<dbReference type="eggNOG" id="KOG4464">
    <property type="taxonomic scope" value="Eukaryota"/>
</dbReference>
<dbReference type="HOGENOM" id="CLU_018602_1_0_1"/>
<dbReference type="InParanoid" id="Q6P4W7"/>
<dbReference type="OrthoDB" id="5585685at2759"/>
<dbReference type="TreeFam" id="TF314907"/>
<dbReference type="Proteomes" id="UP000008143">
    <property type="component" value="Chromosome 7"/>
</dbReference>
<dbReference type="GO" id="GO:0005938">
    <property type="term" value="C:cell cortex"/>
    <property type="evidence" value="ECO:0007669"/>
    <property type="project" value="UniProtKB-SubCell"/>
</dbReference>
<dbReference type="GO" id="GO:0005737">
    <property type="term" value="C:cytoplasm"/>
    <property type="evidence" value="ECO:0000250"/>
    <property type="project" value="UniProtKB"/>
</dbReference>
<dbReference type="GO" id="GO:0005886">
    <property type="term" value="C:plasma membrane"/>
    <property type="evidence" value="ECO:0000250"/>
    <property type="project" value="UniProtKB"/>
</dbReference>
<dbReference type="GO" id="GO:0001965">
    <property type="term" value="F:G-protein alpha-subunit binding"/>
    <property type="evidence" value="ECO:0000250"/>
    <property type="project" value="UniProtKB"/>
</dbReference>
<dbReference type="GO" id="GO:0005085">
    <property type="term" value="F:guanyl-nucleotide exchange factor activity"/>
    <property type="evidence" value="ECO:0000250"/>
    <property type="project" value="UniProtKB"/>
</dbReference>
<dbReference type="GO" id="GO:0044183">
    <property type="term" value="F:protein folding chaperone"/>
    <property type="evidence" value="ECO:0000250"/>
    <property type="project" value="UniProtKB"/>
</dbReference>
<dbReference type="GO" id="GO:0007186">
    <property type="term" value="P:G protein-coupled receptor signaling pathway"/>
    <property type="evidence" value="ECO:0000250"/>
    <property type="project" value="UniProtKB"/>
</dbReference>
<dbReference type="FunFam" id="1.25.10.10:FF:000447">
    <property type="entry name" value="RIC8 guanine nucleotide exchange factor A"/>
    <property type="match status" value="1"/>
</dbReference>
<dbReference type="Gene3D" id="1.25.10.10">
    <property type="entry name" value="Leucine-rich Repeat Variant"/>
    <property type="match status" value="1"/>
</dbReference>
<dbReference type="InterPro" id="IPR011989">
    <property type="entry name" value="ARM-like"/>
</dbReference>
<dbReference type="InterPro" id="IPR016024">
    <property type="entry name" value="ARM-type_fold"/>
</dbReference>
<dbReference type="InterPro" id="IPR008376">
    <property type="entry name" value="Chaperone_Ric-8_A/B"/>
</dbReference>
<dbReference type="InterPro" id="IPR019318">
    <property type="entry name" value="Gua_nucleotide_exch_fac_Ric8"/>
</dbReference>
<dbReference type="PANTHER" id="PTHR12425">
    <property type="entry name" value="SYNEMBRYN"/>
    <property type="match status" value="1"/>
</dbReference>
<dbReference type="PANTHER" id="PTHR12425:SF4">
    <property type="entry name" value="SYNEMBRYN-A"/>
    <property type="match status" value="1"/>
</dbReference>
<dbReference type="Pfam" id="PF10165">
    <property type="entry name" value="Ric8"/>
    <property type="match status" value="1"/>
</dbReference>
<dbReference type="PRINTS" id="PR01802">
    <property type="entry name" value="SYNEMBRYN"/>
</dbReference>
<dbReference type="SUPFAM" id="SSF48371">
    <property type="entry name" value="ARM repeat"/>
    <property type="match status" value="1"/>
</dbReference>
<sequence length="539" mass="61452">MDPGTLLDKLESGDQELVQKALAEYNQENSQCFFFNAEQREERKKLGELVIKFLNRDLQPSCQMACLETIRILSRDKHALSPFTGRSAIQTLAQYAGLDYSEEMEMPSIPDGESAVEALKGLCNIIYNSVEAQEVAKELRLVCGLARRLKLYNETRSSHESKFFDLRLLFLLTALSVDMRKQLAQELRGVSLLTDALESTLALKWSDIYEVVTDRLAPPLGKEETERVMEILKTLFNITFDISRREVDEEDAALYRHLAAILRHCLLRQCDGEDRTEEFHGHTVNLLVNLPLMCLDVLLTPKVEQGSVEYMGMNMDTVEVLIQFLDRRLDRGHKLRETLTPVLNLLTESSRVHRETRKFLRAKVLPPLRDVKNRPEVGNTLRNKLVRLMTHVDTDVKHCAAEFLFVLCKENVSRFVKYTGYGNAAGLLAARGLLAGGRGEGRYSEDEDTDTEEYREAKPNINPVTGRVEEKQPNPMDGMTEEQKEYEAMKLVNMFDKLSREQIIQPMGVTSDGRLEPLDEAAQKMLQRQESSDLESDSD</sequence>
<protein>
    <recommendedName>
        <fullName>Chaperone Ric-8A</fullName>
    </recommendedName>
    <alternativeName>
        <fullName>Synembryn-A</fullName>
    </alternativeName>
</protein>
<name>RIC8A_XENTR</name>
<evidence type="ECO:0000250" key="1">
    <source>
        <dbReference type="UniProtKB" id="Q80ZG1"/>
    </source>
</evidence>
<evidence type="ECO:0000305" key="2"/>